<comment type="function">
    <text evidence="1">Removes N-terminal dipeptides sequentially from polypeptides having unsubstituted N-termini provided that the penultimate residue is proline.</text>
</comment>
<comment type="catalytic activity">
    <reaction evidence="1">
        <text>Hydrolyzes Xaa-Pro-|- bonds to release unblocked, N-terminal dipeptides from substrates including Ala-Pro-|-p-nitroanilide and (sequentially) Tyr-Pro-|-Phe-Pro-|-Gly-Pro-|-Ile.</text>
        <dbReference type="EC" id="3.4.14.11"/>
    </reaction>
</comment>
<comment type="subunit">
    <text evidence="1">Homodimer.</text>
</comment>
<comment type="subcellular location">
    <subcellularLocation>
        <location evidence="1">Cytoplasm</location>
    </subcellularLocation>
</comment>
<comment type="similarity">
    <text evidence="1">Belongs to the peptidase S15 family.</text>
</comment>
<name>PEPX_STRP7</name>
<proteinExistence type="inferred from homology"/>
<sequence>MRFNQYSYINFPKENVLSELKKCGFDLQNTANHKDSLETFLRRFFFTYQDTNYPLSILAADKKTDLLTFFQSEDELTADIFYTVAFQLLGFSYLVDFEDSDVFRKETGFPIIYGDLIENLYQLLNTRTKKGNTLIDQLVSDGLIPEDNDYHYFNGKSLATFSNQDVIREVVYVESRVDTDQKGLSDLVKVSIIRPRFDGKIPAIMTASPYHQGTNDKASDKALYKMEGELEVKLPHKIELEKPQLNLVQPQGKAELIAEAEEKLTHINSSYTLNDYFLPRGFANLYVSGVGTKDSTGFMTNGDYQQIEAYKNVIDWLNGRCRAFTDHTRQRQVKADWSNGKVATTGLSYLGTMSNGLATTGVDGLEVIIAEAGISSWYNYYRENGLVTSPGGYPGEDFDSLAELTYSRNLLAGDYIRGNEAHQADLEKVKAQLDRKTGDYNQFWHDRNYLLNAHKVKAEVVFTHGSQDWNVKPLHVYQMFHALPTHIHKHLFFHNGAHVYMNNWQSIDFRESINALLTKKLLGQETDFQLPTVIWQDNTAPQTWLSLDNFGGQENCETFSLGQEEQAIQNQYPDKDFERYGKTYQTFNTELYQGKANQITINLPVTKDLHLNGRAQLNLRIKSSTNKGLLSAQLLEFGQKKYLQPYPAILSARTIDNGRYHMLENLCELPFRPEAQRVVTKGYLNLQNRNDLLLVEDITADEWMDVQFELQPTIYKLKEGDTLRLVLYTTDFEITIRDNTDYHLTVDLAQSMLTLPC</sequence>
<gene>
    <name evidence="1" type="primary">pepX</name>
    <name type="ordered locus">SP70585_0933</name>
</gene>
<dbReference type="EC" id="3.4.14.11" evidence="1"/>
<dbReference type="EMBL" id="CP000918">
    <property type="protein sequence ID" value="ACO16462.1"/>
    <property type="molecule type" value="Genomic_DNA"/>
</dbReference>
<dbReference type="RefSeq" id="WP_001212037.1">
    <property type="nucleotide sequence ID" value="NC_012468.1"/>
</dbReference>
<dbReference type="SMR" id="C1C6M6"/>
<dbReference type="ESTHER" id="strpn-pepx">
    <property type="family name" value="Lactobacillus_peptidase"/>
</dbReference>
<dbReference type="MEROPS" id="S15.001"/>
<dbReference type="KEGG" id="snm:SP70585_0933"/>
<dbReference type="HOGENOM" id="CLU_011800_0_0_9"/>
<dbReference type="Proteomes" id="UP000002211">
    <property type="component" value="Chromosome"/>
</dbReference>
<dbReference type="GO" id="GO:0005737">
    <property type="term" value="C:cytoplasm"/>
    <property type="evidence" value="ECO:0007669"/>
    <property type="project" value="UniProtKB-SubCell"/>
</dbReference>
<dbReference type="GO" id="GO:0004177">
    <property type="term" value="F:aminopeptidase activity"/>
    <property type="evidence" value="ECO:0007669"/>
    <property type="project" value="UniProtKB-KW"/>
</dbReference>
<dbReference type="GO" id="GO:0008239">
    <property type="term" value="F:dipeptidyl-peptidase activity"/>
    <property type="evidence" value="ECO:0007669"/>
    <property type="project" value="UniProtKB-UniRule"/>
</dbReference>
<dbReference type="GO" id="GO:0008236">
    <property type="term" value="F:serine-type peptidase activity"/>
    <property type="evidence" value="ECO:0007669"/>
    <property type="project" value="UniProtKB-KW"/>
</dbReference>
<dbReference type="GO" id="GO:0006508">
    <property type="term" value="P:proteolysis"/>
    <property type="evidence" value="ECO:0007669"/>
    <property type="project" value="UniProtKB-KW"/>
</dbReference>
<dbReference type="Gene3D" id="1.10.246.70">
    <property type="match status" value="1"/>
</dbReference>
<dbReference type="Gene3D" id="3.40.50.1820">
    <property type="entry name" value="alpha/beta hydrolase"/>
    <property type="match status" value="1"/>
</dbReference>
<dbReference type="Gene3D" id="2.60.120.260">
    <property type="entry name" value="Galactose-binding domain-like"/>
    <property type="match status" value="1"/>
</dbReference>
<dbReference type="HAMAP" id="MF_00698">
    <property type="entry name" value="Aminopeptidase_S15"/>
    <property type="match status" value="1"/>
</dbReference>
<dbReference type="InterPro" id="IPR029058">
    <property type="entry name" value="AB_hydrolase_fold"/>
</dbReference>
<dbReference type="InterPro" id="IPR008979">
    <property type="entry name" value="Galactose-bd-like_sf"/>
</dbReference>
<dbReference type="InterPro" id="IPR008252">
    <property type="entry name" value="Pept_S15_Xpro"/>
</dbReference>
<dbReference type="InterPro" id="IPR015251">
    <property type="entry name" value="PepX_N_dom"/>
</dbReference>
<dbReference type="InterPro" id="IPR036313">
    <property type="entry name" value="PepX_N_dom_sf"/>
</dbReference>
<dbReference type="InterPro" id="IPR000383">
    <property type="entry name" value="Xaa-Pro-like_dom"/>
</dbReference>
<dbReference type="InterPro" id="IPR013736">
    <property type="entry name" value="Xaa-Pro_dipept_C"/>
</dbReference>
<dbReference type="InterPro" id="IPR050585">
    <property type="entry name" value="Xaa-Pro_dipeptidyl-ppase/CocE"/>
</dbReference>
<dbReference type="NCBIfam" id="NF003783">
    <property type="entry name" value="PRK05371.1-4"/>
    <property type="match status" value="1"/>
</dbReference>
<dbReference type="PANTHER" id="PTHR43056:SF10">
    <property type="entry name" value="COCE_NOND FAMILY, PUTATIVE (AFU_ORTHOLOGUE AFUA_7G00600)-RELATED"/>
    <property type="match status" value="1"/>
</dbReference>
<dbReference type="PANTHER" id="PTHR43056">
    <property type="entry name" value="PEPTIDASE S9 PROLYL OLIGOPEPTIDASE"/>
    <property type="match status" value="1"/>
</dbReference>
<dbReference type="Pfam" id="PF02129">
    <property type="entry name" value="Peptidase_S15"/>
    <property type="match status" value="1"/>
</dbReference>
<dbReference type="Pfam" id="PF08530">
    <property type="entry name" value="PepX_C"/>
    <property type="match status" value="1"/>
</dbReference>
<dbReference type="Pfam" id="PF09168">
    <property type="entry name" value="PepX_N"/>
    <property type="match status" value="1"/>
</dbReference>
<dbReference type="PRINTS" id="PR00923">
    <property type="entry name" value="LACTOPTASE"/>
</dbReference>
<dbReference type="SMART" id="SM00939">
    <property type="entry name" value="PepX_C"/>
    <property type="match status" value="1"/>
</dbReference>
<dbReference type="SMART" id="SM00940">
    <property type="entry name" value="PepX_N"/>
    <property type="match status" value="1"/>
</dbReference>
<dbReference type="SUPFAM" id="SSF53474">
    <property type="entry name" value="alpha/beta-Hydrolases"/>
    <property type="match status" value="1"/>
</dbReference>
<dbReference type="SUPFAM" id="SSF49785">
    <property type="entry name" value="Galactose-binding domain-like"/>
    <property type="match status" value="1"/>
</dbReference>
<dbReference type="SUPFAM" id="SSF81761">
    <property type="entry name" value="X-Prolyl dipeptidyl aminopeptidase PepX, N-terminal domain"/>
    <property type="match status" value="1"/>
</dbReference>
<feature type="chain" id="PRO_1000192757" description="Xaa-Pro dipeptidyl-peptidase">
    <location>
        <begin position="1"/>
        <end position="757"/>
    </location>
</feature>
<feature type="active site" description="Charge relay system" evidence="1">
    <location>
        <position position="348"/>
    </location>
</feature>
<feature type="active site" description="Charge relay system" evidence="1">
    <location>
        <position position="468"/>
    </location>
</feature>
<feature type="active site" description="Charge relay system" evidence="1">
    <location>
        <position position="498"/>
    </location>
</feature>
<keyword id="KW-0031">Aminopeptidase</keyword>
<keyword id="KW-0963">Cytoplasm</keyword>
<keyword id="KW-0378">Hydrolase</keyword>
<keyword id="KW-0645">Protease</keyword>
<keyword id="KW-0720">Serine protease</keyword>
<organism>
    <name type="scientific">Streptococcus pneumoniae (strain 70585)</name>
    <dbReference type="NCBI Taxonomy" id="488221"/>
    <lineage>
        <taxon>Bacteria</taxon>
        <taxon>Bacillati</taxon>
        <taxon>Bacillota</taxon>
        <taxon>Bacilli</taxon>
        <taxon>Lactobacillales</taxon>
        <taxon>Streptococcaceae</taxon>
        <taxon>Streptococcus</taxon>
    </lineage>
</organism>
<protein>
    <recommendedName>
        <fullName evidence="1">Xaa-Pro dipeptidyl-peptidase</fullName>
        <ecNumber evidence="1">3.4.14.11</ecNumber>
    </recommendedName>
    <alternativeName>
        <fullName evidence="1">X-Pro dipeptidyl-peptidase</fullName>
    </alternativeName>
    <alternativeName>
        <fullName evidence="1">X-prolyl-dipeptidyl aminopeptidase</fullName>
        <shortName evidence="1">X-PDAP</shortName>
    </alternativeName>
</protein>
<accession>C1C6M6</accession>
<reference key="1">
    <citation type="journal article" date="2010" name="Genome Biol.">
        <title>Structure and dynamics of the pan-genome of Streptococcus pneumoniae and closely related species.</title>
        <authorList>
            <person name="Donati C."/>
            <person name="Hiller N.L."/>
            <person name="Tettelin H."/>
            <person name="Muzzi A."/>
            <person name="Croucher N.J."/>
            <person name="Angiuoli S.V."/>
            <person name="Oggioni M."/>
            <person name="Dunning Hotopp J.C."/>
            <person name="Hu F.Z."/>
            <person name="Riley D.R."/>
            <person name="Covacci A."/>
            <person name="Mitchell T.J."/>
            <person name="Bentley S.D."/>
            <person name="Kilian M."/>
            <person name="Ehrlich G.D."/>
            <person name="Rappuoli R."/>
            <person name="Moxon E.R."/>
            <person name="Masignani V."/>
        </authorList>
    </citation>
    <scope>NUCLEOTIDE SEQUENCE [LARGE SCALE GENOMIC DNA]</scope>
    <source>
        <strain>70585</strain>
    </source>
</reference>
<evidence type="ECO:0000255" key="1">
    <source>
        <dbReference type="HAMAP-Rule" id="MF_00698"/>
    </source>
</evidence>